<feature type="chain" id="PRO_0000299307" description="CREB3 regulatory factor">
    <location>
        <begin position="1"/>
        <end position="640"/>
    </location>
</feature>
<feature type="domain" description="bZIP">
    <location>
        <begin position="522"/>
        <end position="585"/>
    </location>
</feature>
<feature type="region of interest" description="Disordered" evidence="2">
    <location>
        <begin position="308"/>
        <end position="414"/>
    </location>
</feature>
<feature type="region of interest" description="Basic motif" evidence="1">
    <location>
        <begin position="524"/>
        <end position="533"/>
    </location>
</feature>
<feature type="region of interest" description="Leucine-zipper" evidence="1">
    <location>
        <begin position="534"/>
        <end position="541"/>
    </location>
</feature>
<feature type="compositionally biased region" description="Low complexity" evidence="2">
    <location>
        <begin position="317"/>
        <end position="329"/>
    </location>
</feature>
<feature type="compositionally biased region" description="Acidic residues" evidence="2">
    <location>
        <begin position="356"/>
        <end position="371"/>
    </location>
</feature>
<feature type="compositionally biased region" description="Basic and acidic residues" evidence="2">
    <location>
        <begin position="372"/>
        <end position="381"/>
    </location>
</feature>
<feature type="compositionally biased region" description="Acidic residues" evidence="2">
    <location>
        <begin position="382"/>
        <end position="402"/>
    </location>
</feature>
<feature type="sequence conflict" description="In Ref. 3; AAI13192." evidence="4" ref="3">
    <original>F</original>
    <variation>V</variation>
    <location>
        <position position="17"/>
    </location>
</feature>
<comment type="function">
    <text evidence="1">Acts as a negative regulator of the endoplasmic reticulum stress response or unfolded protein response (UPR). Represses the transcriptional activity of CREB3 during the UPR. Recruits CREB3 into nuclear foci (By similarity).</text>
</comment>
<comment type="subunit">
    <text evidence="1">Interacts (via leucine-zipper domain) with CREB3 (via leucine-zipper domain); the interaction promotes CREB3 degradation.</text>
</comment>
<comment type="subcellular location">
    <subcellularLocation>
        <location evidence="1">Nucleus</location>
    </subcellularLocation>
    <text evidence="1">Colocalizes with CREB3 in nuclear foci.</text>
</comment>
<comment type="tissue specificity">
    <text evidence="3">Highly expressed in intestin, testis, heart and kidney, weakly in brain adipose, colon, liver, lung and skeletal.</text>
</comment>
<comment type="PTM">
    <text evidence="1">Probably degraded by the proteasome.</text>
</comment>
<comment type="similarity">
    <text evidence="4">Belongs to the bZIP family. CREBRF subfamily.</text>
</comment>
<keyword id="KW-0539">Nucleus</keyword>
<keyword id="KW-1185">Reference proteome</keyword>
<keyword id="KW-0678">Repressor</keyword>
<keyword id="KW-0346">Stress response</keyword>
<keyword id="KW-0804">Transcription</keyword>
<keyword id="KW-0805">Transcription regulation</keyword>
<keyword id="KW-0813">Transport</keyword>
<keyword id="KW-0834">Unfolded protein response</keyword>
<dbReference type="EMBL" id="AK020796">
    <property type="protein sequence ID" value="BAB32214.1"/>
    <property type="molecule type" value="mRNA"/>
</dbReference>
<dbReference type="EMBL" id="AK030092">
    <property type="protein sequence ID" value="BAC26779.1"/>
    <property type="molecule type" value="mRNA"/>
</dbReference>
<dbReference type="EMBL" id="AK044760">
    <property type="protein sequence ID" value="BAC32070.1"/>
    <property type="molecule type" value="mRNA"/>
</dbReference>
<dbReference type="EMBL" id="CT025550">
    <property type="status" value="NOT_ANNOTATED_CDS"/>
    <property type="molecule type" value="Genomic_DNA"/>
</dbReference>
<dbReference type="EMBL" id="BC113191">
    <property type="protein sequence ID" value="AAI13192.1"/>
    <property type="molecule type" value="mRNA"/>
</dbReference>
<dbReference type="EMBL" id="BC113192">
    <property type="protein sequence ID" value="AAI13193.1"/>
    <property type="molecule type" value="mRNA"/>
</dbReference>
<dbReference type="CCDS" id="CCDS37516.1"/>
<dbReference type="RefSeq" id="NP_084146.1">
    <property type="nucleotide sequence ID" value="NM_029870.2"/>
</dbReference>
<dbReference type="RefSeq" id="XP_006525177.1">
    <property type="nucleotide sequence ID" value="XM_006525114.2"/>
</dbReference>
<dbReference type="RefSeq" id="XP_011245019.2">
    <property type="nucleotide sequence ID" value="XM_011246717.4"/>
</dbReference>
<dbReference type="RefSeq" id="XP_017173212.1">
    <property type="nucleotide sequence ID" value="XM_017317723.3"/>
</dbReference>
<dbReference type="RefSeq" id="XP_036016726.1">
    <property type="nucleotide sequence ID" value="XM_036160833.1"/>
</dbReference>
<dbReference type="RefSeq" id="XP_036016727.1">
    <property type="nucleotide sequence ID" value="XM_036160834.1"/>
</dbReference>
<dbReference type="RefSeq" id="XP_036016728.1">
    <property type="nucleotide sequence ID" value="XM_036160835.1"/>
</dbReference>
<dbReference type="RefSeq" id="XP_036016729.1">
    <property type="nucleotide sequence ID" value="XM_036160836.1"/>
</dbReference>
<dbReference type="FunCoup" id="Q8CDG5">
    <property type="interactions" value="4487"/>
</dbReference>
<dbReference type="STRING" id="10090.ENSMUSP00000059102"/>
<dbReference type="iPTMnet" id="Q8CDG5"/>
<dbReference type="PhosphoSitePlus" id="Q8CDG5"/>
<dbReference type="PaxDb" id="10090-ENSMUSP00000059102"/>
<dbReference type="PeptideAtlas" id="Q8CDG5"/>
<dbReference type="ProteomicsDB" id="278034"/>
<dbReference type="Antibodypedia" id="28933">
    <property type="antibodies" value="30 antibodies from 13 providers"/>
</dbReference>
<dbReference type="DNASU" id="77128"/>
<dbReference type="Ensembl" id="ENSMUST00000062519.14">
    <property type="protein sequence ID" value="ENSMUSP00000059102.8"/>
    <property type="gene ID" value="ENSMUSG00000048249.15"/>
</dbReference>
<dbReference type="GeneID" id="77128"/>
<dbReference type="KEGG" id="mmu:77128"/>
<dbReference type="UCSC" id="uc008bej.1">
    <property type="organism name" value="mouse"/>
</dbReference>
<dbReference type="AGR" id="MGI:1924378"/>
<dbReference type="CTD" id="153222"/>
<dbReference type="MGI" id="MGI:1924378">
    <property type="gene designation" value="Crebrf"/>
</dbReference>
<dbReference type="VEuPathDB" id="HostDB:ENSMUSG00000048249"/>
<dbReference type="eggNOG" id="ENOG502QTAK">
    <property type="taxonomic scope" value="Eukaryota"/>
</dbReference>
<dbReference type="GeneTree" id="ENSGT00390000007125"/>
<dbReference type="HOGENOM" id="CLU_031769_0_0_1"/>
<dbReference type="InParanoid" id="Q8CDG5"/>
<dbReference type="OMA" id="MYQKNGP"/>
<dbReference type="OrthoDB" id="54947at9989"/>
<dbReference type="PhylomeDB" id="Q8CDG5"/>
<dbReference type="TreeFam" id="TF330810"/>
<dbReference type="Reactome" id="R-MMU-8874211">
    <property type="pathway name" value="CREB3 factors activate genes"/>
</dbReference>
<dbReference type="BioGRID-ORCS" id="77128">
    <property type="hits" value="2 hits in 77 CRISPR screens"/>
</dbReference>
<dbReference type="ChiTaRS" id="Crebrf">
    <property type="organism name" value="mouse"/>
</dbReference>
<dbReference type="PRO" id="PR:Q8CDG5"/>
<dbReference type="Proteomes" id="UP000000589">
    <property type="component" value="Chromosome 17"/>
</dbReference>
<dbReference type="RNAct" id="Q8CDG5">
    <property type="molecule type" value="protein"/>
</dbReference>
<dbReference type="Bgee" id="ENSMUSG00000048249">
    <property type="expression patterns" value="Expressed in vestibular membrane of cochlear duct and 248 other cell types or tissues"/>
</dbReference>
<dbReference type="ExpressionAtlas" id="Q8CDG5">
    <property type="expression patterns" value="baseline and differential"/>
</dbReference>
<dbReference type="GO" id="GO:0005737">
    <property type="term" value="C:cytoplasm"/>
    <property type="evidence" value="ECO:0000250"/>
    <property type="project" value="UniProtKB"/>
</dbReference>
<dbReference type="GO" id="GO:0016604">
    <property type="term" value="C:nuclear body"/>
    <property type="evidence" value="ECO:0000314"/>
    <property type="project" value="MGI"/>
</dbReference>
<dbReference type="GO" id="GO:0001228">
    <property type="term" value="F:DNA-binding transcription activator activity, RNA polymerase II-specific"/>
    <property type="evidence" value="ECO:0007669"/>
    <property type="project" value="Ensembl"/>
</dbReference>
<dbReference type="GO" id="GO:0000977">
    <property type="term" value="F:RNA polymerase II transcription regulatory region sequence-specific DNA binding"/>
    <property type="evidence" value="ECO:0007669"/>
    <property type="project" value="Ensembl"/>
</dbReference>
<dbReference type="GO" id="GO:0042711">
    <property type="term" value="P:maternal behavior"/>
    <property type="evidence" value="ECO:0000315"/>
    <property type="project" value="MGI"/>
</dbReference>
<dbReference type="GO" id="GO:1900102">
    <property type="term" value="P:negative regulation of endoplasmic reticulum unfolded protein response"/>
    <property type="evidence" value="ECO:0000250"/>
    <property type="project" value="UniProtKB"/>
</dbReference>
<dbReference type="GO" id="GO:2000323">
    <property type="term" value="P:negative regulation of nuclear receptor-mediated glucocorticoid signaling pathway"/>
    <property type="evidence" value="ECO:0000314"/>
    <property type="project" value="MGI"/>
</dbReference>
<dbReference type="GO" id="GO:0000122">
    <property type="term" value="P:negative regulation of transcription by RNA polymerase II"/>
    <property type="evidence" value="ECO:0000250"/>
    <property type="project" value="UniProtKB"/>
</dbReference>
<dbReference type="GO" id="GO:1902213">
    <property type="term" value="P:positive regulation of prolactin signaling pathway"/>
    <property type="evidence" value="ECO:0000315"/>
    <property type="project" value="MGI"/>
</dbReference>
<dbReference type="GO" id="GO:0045732">
    <property type="term" value="P:positive regulation of protein catabolic process"/>
    <property type="evidence" value="ECO:0000250"/>
    <property type="project" value="UniProtKB"/>
</dbReference>
<dbReference type="GO" id="GO:0034976">
    <property type="term" value="P:response to endoplasmic reticulum stress"/>
    <property type="evidence" value="ECO:0000250"/>
    <property type="project" value="UniProtKB"/>
</dbReference>
<dbReference type="GO" id="GO:0006986">
    <property type="term" value="P:response to unfolded protein"/>
    <property type="evidence" value="ECO:0007669"/>
    <property type="project" value="UniProtKB-KW"/>
</dbReference>
<dbReference type="CDD" id="cd14809">
    <property type="entry name" value="bZIP_AUREO-like"/>
    <property type="match status" value="1"/>
</dbReference>
<dbReference type="InterPro" id="IPR004827">
    <property type="entry name" value="bZIP"/>
</dbReference>
<dbReference type="InterPro" id="IPR046347">
    <property type="entry name" value="bZIP_sf"/>
</dbReference>
<dbReference type="InterPro" id="IPR039165">
    <property type="entry name" value="CREBRF"/>
</dbReference>
<dbReference type="PANTHER" id="PTHR21552">
    <property type="entry name" value="ADULT RETINA PROTEIN"/>
    <property type="match status" value="1"/>
</dbReference>
<dbReference type="PANTHER" id="PTHR21552:SF2">
    <property type="entry name" value="CREB3 REGULATORY FACTOR"/>
    <property type="match status" value="1"/>
</dbReference>
<dbReference type="SUPFAM" id="SSF57959">
    <property type="entry name" value="Leucine zipper domain"/>
    <property type="match status" value="1"/>
</dbReference>
<dbReference type="PROSITE" id="PS00036">
    <property type="entry name" value="BZIP_BASIC"/>
    <property type="match status" value="1"/>
</dbReference>
<reference key="1">
    <citation type="journal article" date="2005" name="Science">
        <title>The transcriptional landscape of the mammalian genome.</title>
        <authorList>
            <person name="Carninci P."/>
            <person name="Kasukawa T."/>
            <person name="Katayama S."/>
            <person name="Gough J."/>
            <person name="Frith M.C."/>
            <person name="Maeda N."/>
            <person name="Oyama R."/>
            <person name="Ravasi T."/>
            <person name="Lenhard B."/>
            <person name="Wells C."/>
            <person name="Kodzius R."/>
            <person name="Shimokawa K."/>
            <person name="Bajic V.B."/>
            <person name="Brenner S.E."/>
            <person name="Batalov S."/>
            <person name="Forrest A.R."/>
            <person name="Zavolan M."/>
            <person name="Davis M.J."/>
            <person name="Wilming L.G."/>
            <person name="Aidinis V."/>
            <person name="Allen J.E."/>
            <person name="Ambesi-Impiombato A."/>
            <person name="Apweiler R."/>
            <person name="Aturaliya R.N."/>
            <person name="Bailey T.L."/>
            <person name="Bansal M."/>
            <person name="Baxter L."/>
            <person name="Beisel K.W."/>
            <person name="Bersano T."/>
            <person name="Bono H."/>
            <person name="Chalk A.M."/>
            <person name="Chiu K.P."/>
            <person name="Choudhary V."/>
            <person name="Christoffels A."/>
            <person name="Clutterbuck D.R."/>
            <person name="Crowe M.L."/>
            <person name="Dalla E."/>
            <person name="Dalrymple B.P."/>
            <person name="de Bono B."/>
            <person name="Della Gatta G."/>
            <person name="di Bernardo D."/>
            <person name="Down T."/>
            <person name="Engstrom P."/>
            <person name="Fagiolini M."/>
            <person name="Faulkner G."/>
            <person name="Fletcher C.F."/>
            <person name="Fukushima T."/>
            <person name="Furuno M."/>
            <person name="Futaki S."/>
            <person name="Gariboldi M."/>
            <person name="Georgii-Hemming P."/>
            <person name="Gingeras T.R."/>
            <person name="Gojobori T."/>
            <person name="Green R.E."/>
            <person name="Gustincich S."/>
            <person name="Harbers M."/>
            <person name="Hayashi Y."/>
            <person name="Hensch T.K."/>
            <person name="Hirokawa N."/>
            <person name="Hill D."/>
            <person name="Huminiecki L."/>
            <person name="Iacono M."/>
            <person name="Ikeo K."/>
            <person name="Iwama A."/>
            <person name="Ishikawa T."/>
            <person name="Jakt M."/>
            <person name="Kanapin A."/>
            <person name="Katoh M."/>
            <person name="Kawasawa Y."/>
            <person name="Kelso J."/>
            <person name="Kitamura H."/>
            <person name="Kitano H."/>
            <person name="Kollias G."/>
            <person name="Krishnan S.P."/>
            <person name="Kruger A."/>
            <person name="Kummerfeld S.K."/>
            <person name="Kurochkin I.V."/>
            <person name="Lareau L.F."/>
            <person name="Lazarevic D."/>
            <person name="Lipovich L."/>
            <person name="Liu J."/>
            <person name="Liuni S."/>
            <person name="McWilliam S."/>
            <person name="Madan Babu M."/>
            <person name="Madera M."/>
            <person name="Marchionni L."/>
            <person name="Matsuda H."/>
            <person name="Matsuzawa S."/>
            <person name="Miki H."/>
            <person name="Mignone F."/>
            <person name="Miyake S."/>
            <person name="Morris K."/>
            <person name="Mottagui-Tabar S."/>
            <person name="Mulder N."/>
            <person name="Nakano N."/>
            <person name="Nakauchi H."/>
            <person name="Ng P."/>
            <person name="Nilsson R."/>
            <person name="Nishiguchi S."/>
            <person name="Nishikawa S."/>
            <person name="Nori F."/>
            <person name="Ohara O."/>
            <person name="Okazaki Y."/>
            <person name="Orlando V."/>
            <person name="Pang K.C."/>
            <person name="Pavan W.J."/>
            <person name="Pavesi G."/>
            <person name="Pesole G."/>
            <person name="Petrovsky N."/>
            <person name="Piazza S."/>
            <person name="Reed J."/>
            <person name="Reid J.F."/>
            <person name="Ring B.Z."/>
            <person name="Ringwald M."/>
            <person name="Rost B."/>
            <person name="Ruan Y."/>
            <person name="Salzberg S.L."/>
            <person name="Sandelin A."/>
            <person name="Schneider C."/>
            <person name="Schoenbach C."/>
            <person name="Sekiguchi K."/>
            <person name="Semple C.A."/>
            <person name="Seno S."/>
            <person name="Sessa L."/>
            <person name="Sheng Y."/>
            <person name="Shibata Y."/>
            <person name="Shimada H."/>
            <person name="Shimada K."/>
            <person name="Silva D."/>
            <person name="Sinclair B."/>
            <person name="Sperling S."/>
            <person name="Stupka E."/>
            <person name="Sugiura K."/>
            <person name="Sultana R."/>
            <person name="Takenaka Y."/>
            <person name="Taki K."/>
            <person name="Tammoja K."/>
            <person name="Tan S.L."/>
            <person name="Tang S."/>
            <person name="Taylor M.S."/>
            <person name="Tegner J."/>
            <person name="Teichmann S.A."/>
            <person name="Ueda H.R."/>
            <person name="van Nimwegen E."/>
            <person name="Verardo R."/>
            <person name="Wei C.L."/>
            <person name="Yagi K."/>
            <person name="Yamanishi H."/>
            <person name="Zabarovsky E."/>
            <person name="Zhu S."/>
            <person name="Zimmer A."/>
            <person name="Hide W."/>
            <person name="Bult C."/>
            <person name="Grimmond S.M."/>
            <person name="Teasdale R.D."/>
            <person name="Liu E.T."/>
            <person name="Brusic V."/>
            <person name="Quackenbush J."/>
            <person name="Wahlestedt C."/>
            <person name="Mattick J.S."/>
            <person name="Hume D.A."/>
            <person name="Kai C."/>
            <person name="Sasaki D."/>
            <person name="Tomaru Y."/>
            <person name="Fukuda S."/>
            <person name="Kanamori-Katayama M."/>
            <person name="Suzuki M."/>
            <person name="Aoki J."/>
            <person name="Arakawa T."/>
            <person name="Iida J."/>
            <person name="Imamura K."/>
            <person name="Itoh M."/>
            <person name="Kato T."/>
            <person name="Kawaji H."/>
            <person name="Kawagashira N."/>
            <person name="Kawashima T."/>
            <person name="Kojima M."/>
            <person name="Kondo S."/>
            <person name="Konno H."/>
            <person name="Nakano K."/>
            <person name="Ninomiya N."/>
            <person name="Nishio T."/>
            <person name="Okada M."/>
            <person name="Plessy C."/>
            <person name="Shibata K."/>
            <person name="Shiraki T."/>
            <person name="Suzuki S."/>
            <person name="Tagami M."/>
            <person name="Waki K."/>
            <person name="Watahiki A."/>
            <person name="Okamura-Oho Y."/>
            <person name="Suzuki H."/>
            <person name="Kawai J."/>
            <person name="Hayashizaki Y."/>
        </authorList>
    </citation>
    <scope>NUCLEOTIDE SEQUENCE [LARGE SCALE MRNA]</scope>
    <source>
        <strain>C57BL/6J</strain>
        <tissue>Retina</tissue>
        <tissue>Testis</tissue>
    </source>
</reference>
<reference key="2">
    <citation type="journal article" date="2009" name="PLoS Biol.">
        <title>Lineage-specific biology revealed by a finished genome assembly of the mouse.</title>
        <authorList>
            <person name="Church D.M."/>
            <person name="Goodstadt L."/>
            <person name="Hillier L.W."/>
            <person name="Zody M.C."/>
            <person name="Goldstein S."/>
            <person name="She X."/>
            <person name="Bult C.J."/>
            <person name="Agarwala R."/>
            <person name="Cherry J.L."/>
            <person name="DiCuccio M."/>
            <person name="Hlavina W."/>
            <person name="Kapustin Y."/>
            <person name="Meric P."/>
            <person name="Maglott D."/>
            <person name="Birtle Z."/>
            <person name="Marques A.C."/>
            <person name="Graves T."/>
            <person name="Zhou S."/>
            <person name="Teague B."/>
            <person name="Potamousis K."/>
            <person name="Churas C."/>
            <person name="Place M."/>
            <person name="Herschleb J."/>
            <person name="Runnheim R."/>
            <person name="Forrest D."/>
            <person name="Amos-Landgraf J."/>
            <person name="Schwartz D.C."/>
            <person name="Cheng Z."/>
            <person name="Lindblad-Toh K."/>
            <person name="Eichler E.E."/>
            <person name="Ponting C.P."/>
        </authorList>
    </citation>
    <scope>NUCLEOTIDE SEQUENCE [LARGE SCALE GENOMIC DNA]</scope>
    <source>
        <strain>C57BL/6J</strain>
    </source>
</reference>
<reference key="3">
    <citation type="journal article" date="2004" name="Genome Res.">
        <title>The status, quality, and expansion of the NIH full-length cDNA project: the Mammalian Gene Collection (MGC).</title>
        <authorList>
            <consortium name="The MGC Project Team"/>
        </authorList>
    </citation>
    <scope>NUCLEOTIDE SEQUENCE [LARGE SCALE MRNA]</scope>
</reference>
<reference key="4">
    <citation type="journal article" date="2008" name="Mol. Cell. Biol.">
        <title>A novel protein, Luman/CREB3 recruitment factor, inhibits Luman activation of the unfolded protein response.</title>
        <authorList>
            <person name="Audas T.E."/>
            <person name="Li Y."/>
            <person name="Liang G."/>
            <person name="Lu R."/>
        </authorList>
    </citation>
    <scope>TISSUE SPECIFICITY</scope>
</reference>
<proteinExistence type="evidence at transcript level"/>
<evidence type="ECO:0000250" key="1"/>
<evidence type="ECO:0000256" key="2">
    <source>
        <dbReference type="SAM" id="MobiDB-lite"/>
    </source>
</evidence>
<evidence type="ECO:0000269" key="3">
    <source>
    </source>
</evidence>
<evidence type="ECO:0000305" key="4"/>
<sequence length="640" mass="72598">MPQPSVSGMDPPFGDAFRSHTFSEQTLMSTDLLANSSDPDFMYELDREMNYQQNPRDNFLSLEDCKDIENLETFTDVLDNEDALTSNWEQWDTYCEDLTKYTKLTSCDIWGTKEVDYLGLDDFSSPYQDEEVISKTPTLAQLNSEDSQSVSDSLYYPDSLFSVKQNPLPPSSFPSKKITNRAAAPVCSSKTLQAEVPSSDCVQKASKPTSSTQIMVKTNMYHNEKVNFHVECKDYVKKAKVKINPVQQGRPLLSQVHIDAAKENTCYCGAVAKRQERRGVEPHQGRGTPALPFKETQELLLSPLTQDSPGLVATAESGSLSASTSVSDSSQKKEEHNYSLFVSDNMREQPTKYSPEDDEDDEDEFDDEDHDEGFGSEHELSENEEEEEEEEDYEDDRDDDISDTFSEPGYENDSVEDLKEMTSISSRKRGKRRYFWEYSEQLTPSQQERILRPSEWNRDTLPSNMYQKNGLHHGKYAVKKSRRTDVEDLTPNPKKLLQIGNELRKLNKVISDLTPVSELPLTARPRSRKEKNKLASRACRLKKKAQYEANKVKLWGLNTEYDNLLFVINSIKQDIVNRVQNPREEREPSMGQKLEILIKDTLGLPVAGQTSEFVNQVLGKTAEGNPTGGLVGLRIPASKV</sequence>
<organism>
    <name type="scientific">Mus musculus</name>
    <name type="common">Mouse</name>
    <dbReference type="NCBI Taxonomy" id="10090"/>
    <lineage>
        <taxon>Eukaryota</taxon>
        <taxon>Metazoa</taxon>
        <taxon>Chordata</taxon>
        <taxon>Craniata</taxon>
        <taxon>Vertebrata</taxon>
        <taxon>Euteleostomi</taxon>
        <taxon>Mammalia</taxon>
        <taxon>Eutheria</taxon>
        <taxon>Euarchontoglires</taxon>
        <taxon>Glires</taxon>
        <taxon>Rodentia</taxon>
        <taxon>Myomorpha</taxon>
        <taxon>Muroidea</taxon>
        <taxon>Muridae</taxon>
        <taxon>Murinae</taxon>
        <taxon>Mus</taxon>
        <taxon>Mus</taxon>
    </lineage>
</organism>
<gene>
    <name type="primary">Crebrf</name>
</gene>
<accession>Q8CDG5</accession>
<accession>B8JJI1</accession>
<accession>Q14DI2</accession>
<accession>Q8C8N7</accession>
<accession>Q9CTQ7</accession>
<name>CRERF_MOUSE</name>
<protein>
    <recommendedName>
        <fullName>CREB3 regulatory factor</fullName>
    </recommendedName>
    <alternativeName>
        <fullName>Luman recruitment factor</fullName>
        <shortName>LRF</shortName>
    </alternativeName>
</protein>